<evidence type="ECO:0000250" key="1">
    <source>
        <dbReference type="UniProtKB" id="P11169"/>
    </source>
</evidence>
<evidence type="ECO:0000250" key="2">
    <source>
        <dbReference type="UniProtKB" id="P32037"/>
    </source>
</evidence>
<evidence type="ECO:0000255" key="3"/>
<evidence type="ECO:0000269" key="4">
    <source>
    </source>
</evidence>
<evidence type="ECO:0000269" key="5">
    <source>
    </source>
</evidence>
<evidence type="ECO:0000269" key="6">
    <source>
    </source>
</evidence>
<evidence type="ECO:0000303" key="7">
    <source>
    </source>
</evidence>
<evidence type="ECO:0000305" key="8"/>
<evidence type="ECO:0007744" key="9">
    <source>
    </source>
</evidence>
<feature type="chain" id="PRO_0000050358" description="Solute carrier family 2, facilitated glucose transporter member 3">
    <location>
        <begin position="1"/>
        <end position="493"/>
    </location>
</feature>
<feature type="topological domain" description="Cytoplasmic" evidence="1">
    <location>
        <begin position="1"/>
        <end position="10"/>
    </location>
</feature>
<feature type="transmembrane region" description="Helical; Name=1" evidence="1 3">
    <location>
        <begin position="11"/>
        <end position="32"/>
    </location>
</feature>
<feature type="topological domain" description="Extracellular" evidence="1">
    <location>
        <begin position="33"/>
        <end position="64"/>
    </location>
</feature>
<feature type="transmembrane region" description="Helical; Name=2" evidence="1 3">
    <location>
        <begin position="65"/>
        <end position="85"/>
    </location>
</feature>
<feature type="topological domain" description="Cytoplasmic" evidence="1">
    <location>
        <begin position="86"/>
        <end position="90"/>
    </location>
</feature>
<feature type="transmembrane region" description="Helical; Name=3" evidence="1 3">
    <location>
        <begin position="91"/>
        <end position="111"/>
    </location>
</feature>
<feature type="topological domain" description="Extracellular" evidence="1">
    <location>
        <begin position="112"/>
        <end position="118"/>
    </location>
</feature>
<feature type="transmembrane region" description="Helical; Name=4" evidence="1 3">
    <location>
        <begin position="119"/>
        <end position="142"/>
    </location>
</feature>
<feature type="topological domain" description="Cytoplasmic" evidence="1">
    <location>
        <begin position="143"/>
        <end position="153"/>
    </location>
</feature>
<feature type="transmembrane region" description="Helical; Name=5" evidence="1 3">
    <location>
        <begin position="154"/>
        <end position="174"/>
    </location>
</feature>
<feature type="topological domain" description="Extracellular" evidence="1">
    <location>
        <begin position="175"/>
        <end position="183"/>
    </location>
</feature>
<feature type="transmembrane region" description="Helical; Name=6" evidence="1 3">
    <location>
        <begin position="184"/>
        <end position="204"/>
    </location>
</feature>
<feature type="topological domain" description="Cytoplasmic" evidence="1">
    <location>
        <begin position="205"/>
        <end position="269"/>
    </location>
</feature>
<feature type="transmembrane region" description="Helical; Name=7" evidence="1 3">
    <location>
        <begin position="270"/>
        <end position="290"/>
    </location>
</feature>
<feature type="topological domain" description="Extracellular" evidence="1">
    <location>
        <begin position="291"/>
        <end position="304"/>
    </location>
</feature>
<feature type="transmembrane region" description="Helical; Name=8" evidence="1 3">
    <location>
        <begin position="305"/>
        <end position="325"/>
    </location>
</feature>
<feature type="topological domain" description="Cytoplasmic" evidence="1">
    <location>
        <begin position="326"/>
        <end position="331"/>
    </location>
</feature>
<feature type="transmembrane region" description="Helical; Name=9" evidence="1 3">
    <location>
        <begin position="332"/>
        <end position="352"/>
    </location>
</feature>
<feature type="topological domain" description="Extracellular" evidence="1">
    <location>
        <begin position="353"/>
        <end position="363"/>
    </location>
</feature>
<feature type="transmembrane region" description="Helical; Name=10" evidence="1 3">
    <location>
        <begin position="364"/>
        <end position="389"/>
    </location>
</feature>
<feature type="topological domain" description="Cytoplasmic" evidence="1">
    <location>
        <begin position="390"/>
        <end position="399"/>
    </location>
</feature>
<feature type="transmembrane region" description="Helical; Name=11" evidence="1 3">
    <location>
        <begin position="400"/>
        <end position="420"/>
    </location>
</feature>
<feature type="topological domain" description="Extracellular" evidence="1">
    <location>
        <begin position="421"/>
        <end position="429"/>
    </location>
</feature>
<feature type="transmembrane region" description="Helical; Name=12" evidence="1 3">
    <location>
        <begin position="430"/>
        <end position="450"/>
    </location>
</feature>
<feature type="topological domain" description="Cytoplasmic" evidence="1">
    <location>
        <begin position="451"/>
        <end position="493"/>
    </location>
</feature>
<feature type="region of interest" description="Important for selectivity against fructose" evidence="1">
    <location>
        <begin position="277"/>
        <end position="279"/>
    </location>
</feature>
<feature type="binding site" evidence="1">
    <location>
        <position position="159"/>
    </location>
    <ligand>
        <name>D-glucose</name>
        <dbReference type="ChEBI" id="CHEBI:4167"/>
    </ligand>
</feature>
<feature type="binding site" evidence="1">
    <location>
        <begin position="280"/>
        <end position="281"/>
    </location>
    <ligand>
        <name>D-glucose</name>
        <dbReference type="ChEBI" id="CHEBI:4167"/>
    </ligand>
</feature>
<feature type="binding site" evidence="1">
    <location>
        <position position="286"/>
    </location>
    <ligand>
        <name>D-glucose</name>
        <dbReference type="ChEBI" id="CHEBI:4167"/>
    </ligand>
</feature>
<feature type="binding site" evidence="1">
    <location>
        <position position="315"/>
    </location>
    <ligand>
        <name>D-glucose</name>
        <dbReference type="ChEBI" id="CHEBI:4167"/>
    </ligand>
</feature>
<feature type="binding site" evidence="1">
    <location>
        <position position="378"/>
    </location>
    <ligand>
        <name>D-glucose</name>
        <dbReference type="ChEBI" id="CHEBI:4167"/>
    </ligand>
</feature>
<feature type="binding site" evidence="1">
    <location>
        <position position="386"/>
    </location>
    <ligand>
        <name>D-glucose</name>
        <dbReference type="ChEBI" id="CHEBI:4167"/>
    </ligand>
</feature>
<feature type="modified residue" description="Phosphothreonine" evidence="2">
    <location>
        <position position="232"/>
    </location>
</feature>
<feature type="modified residue" description="Phosphoserine" evidence="2">
    <location>
        <position position="471"/>
    </location>
</feature>
<feature type="modified residue" description="Phosphoserine" evidence="9">
    <location>
        <position position="475"/>
    </location>
</feature>
<feature type="modified residue" description="Phosphoserine" evidence="9">
    <location>
        <position position="482"/>
    </location>
</feature>
<feature type="modified residue" description="Phosphothreonine" evidence="9">
    <location>
        <position position="489"/>
    </location>
</feature>
<feature type="glycosylation site" description="N-linked (GlcNAc...) asparagine" evidence="3">
    <location>
        <position position="43"/>
    </location>
</feature>
<feature type="sequence conflict" description="In Ref. 2; AAA62503." evidence="8" ref="2">
    <original>R</original>
    <variation>S</variation>
    <location>
        <position position="55"/>
    </location>
</feature>
<feature type="sequence conflict" description="In Ref. 2; AAA62503." evidence="8" ref="2">
    <original>S</original>
    <variation>F</variation>
    <location>
        <position position="447"/>
    </location>
</feature>
<feature type="sequence conflict" description="In Ref. 2; AAA62503." evidence="8" ref="2">
    <original>H</original>
    <variation>Q</variation>
    <location>
        <position position="470"/>
    </location>
</feature>
<proteinExistence type="evidence at protein level"/>
<reference key="1">
    <citation type="journal article" date="1993" name="FEBS Lett.">
        <title>Neuron-specific glucose transporter (NSGT): CNS distribution of GLUT3 rat glucose transporter (RGT3) in rat central neurons.</title>
        <authorList>
            <person name="Nagamatsu S."/>
            <person name="Sawa H."/>
            <person name="Kamada K."/>
            <person name="Nakamichi Y."/>
            <person name="Yoshimoto K."/>
            <person name="Hoshino T."/>
        </authorList>
    </citation>
    <scope>NUCLEOTIDE SEQUENCE [MRNA]</scope>
</reference>
<reference key="2">
    <citation type="journal article" date="1995" name="Life Sci.">
        <title>Cloning of glucose transporter-3 (GLUT3) cDNA from rat brain.</title>
        <authorList>
            <person name="Krishnan S.N."/>
            <person name="Haddad G.G."/>
        </authorList>
    </citation>
    <scope>NUCLEOTIDE SEQUENCE [MRNA]</scope>
    <scope>TISSUE SPECIFICITY</scope>
    <source>
        <strain>Sprague-Dawley</strain>
        <tissue>Brain</tissue>
    </source>
</reference>
<reference key="3">
    <citation type="journal article" date="2011" name="Mol. Cell. Biochem.">
        <title>Stimulation of glucose transport in osteoblastic cells by parathyroid hormone and insulin-like growth factor I.</title>
        <authorList>
            <person name="Zoidis E."/>
            <person name="Ghirlanda-Keller C."/>
            <person name="Schmid C."/>
        </authorList>
    </citation>
    <scope>TISSUE SPECIFICITY</scope>
</reference>
<reference key="4">
    <citation type="journal article" date="2012" name="Nat. Commun.">
        <title>Quantitative maps of protein phosphorylation sites across 14 different rat organs and tissues.</title>
        <authorList>
            <person name="Lundby A."/>
            <person name="Secher A."/>
            <person name="Lage K."/>
            <person name="Nordsborg N.B."/>
            <person name="Dmytriyev A."/>
            <person name="Lundby C."/>
            <person name="Olsen J.V."/>
        </authorList>
    </citation>
    <scope>PHOSPHORYLATION [LARGE SCALE ANALYSIS] AT SER-475; SER-482 AND THR-489</scope>
    <scope>IDENTIFICATION BY MASS SPECTROMETRY [LARGE SCALE ANALYSIS]</scope>
</reference>
<reference key="5">
    <citation type="journal article" date="2014" name="Cell">
        <title>Glucose regulates mitochondrial motility via Milton modification by O-GlcNAc transferase.</title>
        <authorList>
            <person name="Pekkurnaz G."/>
            <person name="Trinidad J.C."/>
            <person name="Wang X."/>
            <person name="Kong D."/>
            <person name="Schwarz T.L."/>
        </authorList>
    </citation>
    <scope>SUBCELLULAR LOCATION</scope>
</reference>
<comment type="function">
    <text evidence="1 2">Facilitative glucose transporter. Can also mediate the uptake of various other monosaccharides across the cell membrane. Mediates the uptake of glucose, 2-deoxyglucose, galactose, mannose, xylose and fucose, and probably also dehydroascorbate. Does not mediate fructose transport. Required for mesendoderm differentiation (By similarity).</text>
</comment>
<comment type="catalytic activity">
    <reaction evidence="1">
        <text>D-glucose(out) = D-glucose(in)</text>
        <dbReference type="Rhea" id="RHEA:60376"/>
        <dbReference type="ChEBI" id="CHEBI:4167"/>
    </reaction>
</comment>
<comment type="catalytic activity">
    <reaction evidence="1">
        <text>D-galactose(in) = D-galactose(out)</text>
        <dbReference type="Rhea" id="RHEA:34915"/>
        <dbReference type="ChEBI" id="CHEBI:4139"/>
    </reaction>
</comment>
<comment type="activity regulation">
    <text evidence="1">Deoxyglucose transport is inhibited by D-glucose, D-galactose and maltose. Galactose transport is inhibited by D-glucose and maltose.</text>
</comment>
<comment type="subunit">
    <text evidence="2">Interacts with SMIM43; the interaction may promote SLC2A3-mediated glucose transport to meet the energy needs of mesendoderm differentiation.</text>
</comment>
<comment type="subcellular location">
    <subcellularLocation>
        <location evidence="1">Cell membrane</location>
        <topology evidence="1">Multi-pass membrane protein</topology>
    </subcellularLocation>
    <subcellularLocation>
        <location evidence="5">Perikaryon</location>
    </subcellularLocation>
    <subcellularLocation>
        <location evidence="5">Cell projection</location>
    </subcellularLocation>
    <text evidence="5">Localized to densely spaced patches along neuronal processes.</text>
</comment>
<comment type="tissue specificity">
    <text evidence="4 6">Brain and osteoblastic cells (at protein level) (PubMed:21076856). Highly expressed in brain (PubMed:21076856, PubMed:7475896).</text>
</comment>
<comment type="domain">
    <text evidence="1">Transport is mediated via a series of conformation changes, switching between a conformation where the substrate-binding cavity is accessible from the outside, and a another conformation where it is accessible from the cytoplasm.</text>
</comment>
<comment type="similarity">
    <text evidence="8">Belongs to the major facilitator superfamily. Sugar transporter (TC 2.A.1.1) family. Glucose transporter subfamily.</text>
</comment>
<organism>
    <name type="scientific">Rattus norvegicus</name>
    <name type="common">Rat</name>
    <dbReference type="NCBI Taxonomy" id="10116"/>
    <lineage>
        <taxon>Eukaryota</taxon>
        <taxon>Metazoa</taxon>
        <taxon>Chordata</taxon>
        <taxon>Craniata</taxon>
        <taxon>Vertebrata</taxon>
        <taxon>Euteleostomi</taxon>
        <taxon>Mammalia</taxon>
        <taxon>Eutheria</taxon>
        <taxon>Euarchontoglires</taxon>
        <taxon>Glires</taxon>
        <taxon>Rodentia</taxon>
        <taxon>Myomorpha</taxon>
        <taxon>Muroidea</taxon>
        <taxon>Muridae</taxon>
        <taxon>Murinae</taxon>
        <taxon>Rattus</taxon>
    </lineage>
</organism>
<dbReference type="EMBL" id="D13962">
    <property type="protein sequence ID" value="BAA03065.1"/>
    <property type="molecule type" value="mRNA"/>
</dbReference>
<dbReference type="EMBL" id="U17978">
    <property type="protein sequence ID" value="AAA62503.1"/>
    <property type="molecule type" value="mRNA"/>
</dbReference>
<dbReference type="PIR" id="S38981">
    <property type="entry name" value="S38981"/>
</dbReference>
<dbReference type="RefSeq" id="NP_058798.2">
    <property type="nucleotide sequence ID" value="NM_017102.2"/>
</dbReference>
<dbReference type="RefSeq" id="XP_003749881.1">
    <property type="nucleotide sequence ID" value="XM_003749833.4"/>
</dbReference>
<dbReference type="RefSeq" id="XP_017458346.1">
    <property type="nucleotide sequence ID" value="XM_017602857.1"/>
</dbReference>
<dbReference type="SMR" id="Q07647"/>
<dbReference type="BioGRID" id="247582">
    <property type="interactions" value="1"/>
</dbReference>
<dbReference type="FunCoup" id="Q07647">
    <property type="interactions" value="526"/>
</dbReference>
<dbReference type="IntAct" id="Q07647">
    <property type="interactions" value="1"/>
</dbReference>
<dbReference type="STRING" id="10116.ENSRNOP00000066684"/>
<dbReference type="TCDB" id="2.A.1.1.12">
    <property type="family name" value="the major facilitator superfamily (mfs)"/>
</dbReference>
<dbReference type="GlyCosmos" id="Q07647">
    <property type="glycosylation" value="1 site, No reported glycans"/>
</dbReference>
<dbReference type="GlyGen" id="Q07647">
    <property type="glycosylation" value="2 sites"/>
</dbReference>
<dbReference type="iPTMnet" id="Q07647"/>
<dbReference type="PhosphoSitePlus" id="Q07647"/>
<dbReference type="jPOST" id="Q07647"/>
<dbReference type="PaxDb" id="10116-ENSRNOP00000011298"/>
<dbReference type="GeneID" id="25551"/>
<dbReference type="KEGG" id="rno:25551"/>
<dbReference type="UCSC" id="RGD:3706">
    <property type="organism name" value="rat"/>
</dbReference>
<dbReference type="AGR" id="RGD:3706"/>
<dbReference type="CTD" id="6515"/>
<dbReference type="RGD" id="3706">
    <property type="gene designation" value="Slc2a3"/>
</dbReference>
<dbReference type="eggNOG" id="KOG0569">
    <property type="taxonomic scope" value="Eukaryota"/>
</dbReference>
<dbReference type="InParanoid" id="Q07647"/>
<dbReference type="PhylomeDB" id="Q07647"/>
<dbReference type="TreeFam" id="TF313762"/>
<dbReference type="Reactome" id="R-RNO-189200">
    <property type="pathway name" value="Cellular hexose transport"/>
</dbReference>
<dbReference type="Reactome" id="R-RNO-196836">
    <property type="pathway name" value="Vitamin C (ascorbate) metabolism"/>
</dbReference>
<dbReference type="Reactome" id="R-RNO-6798695">
    <property type="pathway name" value="Neutrophil degranulation"/>
</dbReference>
<dbReference type="PRO" id="PR:Q07647"/>
<dbReference type="Proteomes" id="UP000002494">
    <property type="component" value="Unplaced"/>
</dbReference>
<dbReference type="GO" id="GO:0002080">
    <property type="term" value="C:acrosomal membrane"/>
    <property type="evidence" value="ECO:0000266"/>
    <property type="project" value="RGD"/>
</dbReference>
<dbReference type="GO" id="GO:0005901">
    <property type="term" value="C:caveola"/>
    <property type="evidence" value="ECO:0000314"/>
    <property type="project" value="RGD"/>
</dbReference>
<dbReference type="GO" id="GO:0042995">
    <property type="term" value="C:cell projection"/>
    <property type="evidence" value="ECO:0007669"/>
    <property type="project" value="UniProtKB-SubCell"/>
</dbReference>
<dbReference type="GO" id="GO:0005737">
    <property type="term" value="C:cytoplasm"/>
    <property type="evidence" value="ECO:0000314"/>
    <property type="project" value="UniProtKB"/>
</dbReference>
<dbReference type="GO" id="GO:0098978">
    <property type="term" value="C:glutamatergic synapse"/>
    <property type="evidence" value="ECO:0000314"/>
    <property type="project" value="SynGO"/>
</dbReference>
<dbReference type="GO" id="GO:0016020">
    <property type="term" value="C:membrane"/>
    <property type="evidence" value="ECO:0000250"/>
    <property type="project" value="UniProtKB"/>
</dbReference>
<dbReference type="GO" id="GO:0043204">
    <property type="term" value="C:perikaryon"/>
    <property type="evidence" value="ECO:0007669"/>
    <property type="project" value="UniProtKB-SubCell"/>
</dbReference>
<dbReference type="GO" id="GO:0005886">
    <property type="term" value="C:plasma membrane"/>
    <property type="evidence" value="ECO:0000314"/>
    <property type="project" value="UniProtKB"/>
</dbReference>
<dbReference type="GO" id="GO:0097060">
    <property type="term" value="C:synaptic membrane"/>
    <property type="evidence" value="ECO:0000314"/>
    <property type="project" value="SynGO"/>
</dbReference>
<dbReference type="GO" id="GO:0030672">
    <property type="term" value="C:synaptic vesicle membrane"/>
    <property type="evidence" value="ECO:0000314"/>
    <property type="project" value="RGD"/>
</dbReference>
<dbReference type="GO" id="GO:0005536">
    <property type="term" value="F:D-glucose binding"/>
    <property type="evidence" value="ECO:0000314"/>
    <property type="project" value="RGD"/>
</dbReference>
<dbReference type="GO" id="GO:0055056">
    <property type="term" value="F:D-glucose transmembrane transporter activity"/>
    <property type="evidence" value="ECO:0000314"/>
    <property type="project" value="UniProtKB"/>
</dbReference>
<dbReference type="GO" id="GO:0033300">
    <property type="term" value="F:dehydroascorbic acid transmembrane transporter activity"/>
    <property type="evidence" value="ECO:0000314"/>
    <property type="project" value="UniProtKB"/>
</dbReference>
<dbReference type="GO" id="GO:0005354">
    <property type="term" value="F:galactose transmembrane transporter activity"/>
    <property type="evidence" value="ECO:0000250"/>
    <property type="project" value="UniProtKB"/>
</dbReference>
<dbReference type="GO" id="GO:0016936">
    <property type="term" value="F:galactoside binding"/>
    <property type="evidence" value="ECO:0000314"/>
    <property type="project" value="RGD"/>
</dbReference>
<dbReference type="GO" id="GO:0019900">
    <property type="term" value="F:kinase binding"/>
    <property type="evidence" value="ECO:0000353"/>
    <property type="project" value="RGD"/>
</dbReference>
<dbReference type="GO" id="GO:0015145">
    <property type="term" value="F:monosaccharide transmembrane transporter activity"/>
    <property type="evidence" value="ECO:0000314"/>
    <property type="project" value="RGD"/>
</dbReference>
<dbReference type="GO" id="GO:0033222">
    <property type="term" value="F:xylose binding"/>
    <property type="evidence" value="ECO:0000314"/>
    <property type="project" value="RGD"/>
</dbReference>
<dbReference type="GO" id="GO:0021987">
    <property type="term" value="P:cerebral cortex development"/>
    <property type="evidence" value="ECO:0000270"/>
    <property type="project" value="RGD"/>
</dbReference>
<dbReference type="GO" id="GO:0046323">
    <property type="term" value="P:D-glucose import"/>
    <property type="evidence" value="ECO:0000314"/>
    <property type="project" value="RGD"/>
</dbReference>
<dbReference type="GO" id="GO:0098708">
    <property type="term" value="P:D-glucose import across plasma membrane"/>
    <property type="evidence" value="ECO:0000266"/>
    <property type="project" value="RGD"/>
</dbReference>
<dbReference type="GO" id="GO:1904659">
    <property type="term" value="P:D-glucose transmembrane transport"/>
    <property type="evidence" value="ECO:0000314"/>
    <property type="project" value="UniProtKB"/>
</dbReference>
<dbReference type="GO" id="GO:0070837">
    <property type="term" value="P:dehydroascorbic acid transport"/>
    <property type="evidence" value="ECO:0000314"/>
    <property type="project" value="UniProtKB"/>
</dbReference>
<dbReference type="GO" id="GO:0015757">
    <property type="term" value="P:galactose transmembrane transport"/>
    <property type="evidence" value="ECO:0000250"/>
    <property type="project" value="UniProtKB"/>
</dbReference>
<dbReference type="GO" id="GO:0015749">
    <property type="term" value="P:monosaccharide transmembrane transport"/>
    <property type="evidence" value="ECO:0000314"/>
    <property type="project" value="RGD"/>
</dbReference>
<dbReference type="GO" id="GO:0043066">
    <property type="term" value="P:negative regulation of apoptotic process"/>
    <property type="evidence" value="ECO:0000314"/>
    <property type="project" value="RGD"/>
</dbReference>
<dbReference type="GO" id="GO:0009749">
    <property type="term" value="P:response to glucose"/>
    <property type="evidence" value="ECO:0000270"/>
    <property type="project" value="RGD"/>
</dbReference>
<dbReference type="GO" id="GO:1904016">
    <property type="term" value="P:response to Thyroglobulin triiodothyronine"/>
    <property type="evidence" value="ECO:0000270"/>
    <property type="project" value="RGD"/>
</dbReference>
<dbReference type="GO" id="GO:0150104">
    <property type="term" value="P:transport across blood-brain barrier"/>
    <property type="evidence" value="ECO:0000266"/>
    <property type="project" value="RGD"/>
</dbReference>
<dbReference type="CDD" id="cd17431">
    <property type="entry name" value="MFS_GLUT_Class1"/>
    <property type="match status" value="1"/>
</dbReference>
<dbReference type="FunFam" id="1.20.1250.20:FF:000040">
    <property type="entry name" value="Solute carrier family 2, facilitated glucose transporter member 1"/>
    <property type="match status" value="1"/>
</dbReference>
<dbReference type="Gene3D" id="1.20.1250.20">
    <property type="entry name" value="MFS general substrate transporter like domains"/>
    <property type="match status" value="1"/>
</dbReference>
<dbReference type="InterPro" id="IPR002945">
    <property type="entry name" value="Glc_transpt_3"/>
</dbReference>
<dbReference type="InterPro" id="IPR045263">
    <property type="entry name" value="GLUT"/>
</dbReference>
<dbReference type="InterPro" id="IPR020846">
    <property type="entry name" value="MFS_dom"/>
</dbReference>
<dbReference type="InterPro" id="IPR005828">
    <property type="entry name" value="MFS_sugar_transport-like"/>
</dbReference>
<dbReference type="InterPro" id="IPR036259">
    <property type="entry name" value="MFS_trans_sf"/>
</dbReference>
<dbReference type="InterPro" id="IPR003663">
    <property type="entry name" value="Sugar/inositol_transpt"/>
</dbReference>
<dbReference type="InterPro" id="IPR005829">
    <property type="entry name" value="Sugar_transporter_CS"/>
</dbReference>
<dbReference type="NCBIfam" id="TIGR00879">
    <property type="entry name" value="SP"/>
    <property type="match status" value="1"/>
</dbReference>
<dbReference type="PANTHER" id="PTHR23503">
    <property type="entry name" value="SOLUTE CARRIER FAMILY 2"/>
    <property type="match status" value="1"/>
</dbReference>
<dbReference type="PANTHER" id="PTHR23503:SF99">
    <property type="entry name" value="SOLUTE CARRIER FAMILY 2, FACILITATED GLUCOSE TRANSPORTER MEMBER 3"/>
    <property type="match status" value="1"/>
</dbReference>
<dbReference type="Pfam" id="PF00083">
    <property type="entry name" value="Sugar_tr"/>
    <property type="match status" value="1"/>
</dbReference>
<dbReference type="PRINTS" id="PR01192">
    <property type="entry name" value="GLUCTRSPORT3"/>
</dbReference>
<dbReference type="PRINTS" id="PR00171">
    <property type="entry name" value="SUGRTRNSPORT"/>
</dbReference>
<dbReference type="SUPFAM" id="SSF103473">
    <property type="entry name" value="MFS general substrate transporter"/>
    <property type="match status" value="1"/>
</dbReference>
<dbReference type="PROSITE" id="PS50850">
    <property type="entry name" value="MFS"/>
    <property type="match status" value="1"/>
</dbReference>
<dbReference type="PROSITE" id="PS00216">
    <property type="entry name" value="SUGAR_TRANSPORT_1"/>
    <property type="match status" value="1"/>
</dbReference>
<dbReference type="PROSITE" id="PS00217">
    <property type="entry name" value="SUGAR_TRANSPORT_2"/>
    <property type="match status" value="1"/>
</dbReference>
<name>GTR3_RAT</name>
<gene>
    <name evidence="1" type="primary">Slc2a3</name>
    <name evidence="7" type="synonym">Glut3</name>
</gene>
<accession>Q07647</accession>
<accession>Q62729</accession>
<sequence length="493" mass="53581">MGTAKVTPSLVFAVTVATIGSFQFGYNTGVINAPETIIKDFLNYTLEERLEDLPREGLLTTLWSLCVAIFSVGGMIGSFSVGLFVNRFGRRNSMLLVNLIAILGGCLMGFAKIAESVEMLILGRLIIGIFCGLCTGFVPMYIGEVSPTALRGAFGTLNQLGIVVGILVAQVFGLDFILGSEELWPGLLGLTIIPAILQSAALPFCPESPRFLLINRKEEDQATEILQRLWGTPDVIQEIQEMKDESIRMSQEKQVTVLELFKSPSYFQPLLISVVLQLSQQFSGINAVFYYSTGIFQDAGVQEPIYATIGAGVVNTIFTVVSLFLVERAGRRTLHMIGLGGMAVCSVFMTISLLLKDEYEAMSFVCIVAILVYVAFFEIGPGPIPWFIVAELFSQGPRPAAMAVAGCSNWTSNFLVGMFFPSAAAYLGAYVFIIFAAFLVFFLIFTSFKVPETKGRTFEDITRAFEGQAHSGKGSAGVELNSMQPVKETPGNA</sequence>
<keyword id="KW-1003">Cell membrane</keyword>
<keyword id="KW-0966">Cell projection</keyword>
<keyword id="KW-0325">Glycoprotein</keyword>
<keyword id="KW-0472">Membrane</keyword>
<keyword id="KW-0597">Phosphoprotein</keyword>
<keyword id="KW-1185">Reference proteome</keyword>
<keyword id="KW-0762">Sugar transport</keyword>
<keyword id="KW-0812">Transmembrane</keyword>
<keyword id="KW-1133">Transmembrane helix</keyword>
<keyword id="KW-0813">Transport</keyword>
<protein>
    <recommendedName>
        <fullName evidence="8">Solute carrier family 2, facilitated glucose transporter member 3</fullName>
    </recommendedName>
    <alternativeName>
        <fullName evidence="7">Glucose transporter type 3, brain</fullName>
        <shortName evidence="7">GLUT-3</shortName>
    </alternativeName>
</protein>